<proteinExistence type="inferred from homology"/>
<feature type="chain" id="PRO_0000385761" description="GTPase Obg">
    <location>
        <begin position="1"/>
        <end position="346"/>
    </location>
</feature>
<feature type="domain" description="Obg" evidence="2">
    <location>
        <begin position="1"/>
        <end position="159"/>
    </location>
</feature>
<feature type="domain" description="OBG-type G" evidence="1">
    <location>
        <begin position="160"/>
        <end position="327"/>
    </location>
</feature>
<feature type="binding site" evidence="1">
    <location>
        <begin position="166"/>
        <end position="173"/>
    </location>
    <ligand>
        <name>GTP</name>
        <dbReference type="ChEBI" id="CHEBI:37565"/>
    </ligand>
</feature>
<feature type="binding site" evidence="1">
    <location>
        <position position="173"/>
    </location>
    <ligand>
        <name>Mg(2+)</name>
        <dbReference type="ChEBI" id="CHEBI:18420"/>
    </ligand>
</feature>
<feature type="binding site" evidence="1">
    <location>
        <begin position="191"/>
        <end position="195"/>
    </location>
    <ligand>
        <name>GTP</name>
        <dbReference type="ChEBI" id="CHEBI:37565"/>
    </ligand>
</feature>
<feature type="binding site" evidence="1">
    <location>
        <position position="193"/>
    </location>
    <ligand>
        <name>Mg(2+)</name>
        <dbReference type="ChEBI" id="CHEBI:18420"/>
    </ligand>
</feature>
<feature type="binding site" evidence="1">
    <location>
        <begin position="212"/>
        <end position="215"/>
    </location>
    <ligand>
        <name>GTP</name>
        <dbReference type="ChEBI" id="CHEBI:37565"/>
    </ligand>
</feature>
<feature type="binding site" evidence="1">
    <location>
        <begin position="279"/>
        <end position="282"/>
    </location>
    <ligand>
        <name>GTP</name>
        <dbReference type="ChEBI" id="CHEBI:37565"/>
    </ligand>
</feature>
<feature type="binding site" evidence="1">
    <location>
        <begin position="308"/>
        <end position="310"/>
    </location>
    <ligand>
        <name>GTP</name>
        <dbReference type="ChEBI" id="CHEBI:37565"/>
    </ligand>
</feature>
<gene>
    <name evidence="1" type="primary">obg</name>
    <name type="ordered locus">blr0425</name>
</gene>
<evidence type="ECO:0000255" key="1">
    <source>
        <dbReference type="HAMAP-Rule" id="MF_01454"/>
    </source>
</evidence>
<evidence type="ECO:0000255" key="2">
    <source>
        <dbReference type="PROSITE-ProRule" id="PRU01231"/>
    </source>
</evidence>
<sequence length="346" mass="36986">MKFLDEAKVYIRSGDGGNGCVAFRREKFIEFGGPSGGNGGRGGNVIIEVADGLNTLIDYRYQQHFKAQKGENGAGSDRHGANGKNIVLKVPMGTQIFDEDRETLIHDFTNVGEKFVLAEGGNGGFGNAHFKSSTNRAPRNANPGQPGEERWIWLRLKLIADAGLVGLPNAGKSTFLSKVSAAKPKIADYPFTTLHPQLGVVNADGREFVLADIPGLIEGAHEGAGLGDRFLGHVERCRVLLHLVDATCEHAGKAYKTVRTELDAYGGLLTDKIEIVALNKIDAVEPDELKKQKDRLKRAAKKTPLLLSAATGEGVKEALRALVAVIGEAPVSAKAKSAAEAEPWSA</sequence>
<comment type="function">
    <text evidence="1">An essential GTPase which binds GTP, GDP and possibly (p)ppGpp with moderate affinity, with high nucleotide exchange rates and a fairly low GTP hydrolysis rate. Plays a role in control of the cell cycle, stress response, ribosome biogenesis and in those bacteria that undergo differentiation, in morphogenesis control.</text>
</comment>
<comment type="cofactor">
    <cofactor evidence="1">
        <name>Mg(2+)</name>
        <dbReference type="ChEBI" id="CHEBI:18420"/>
    </cofactor>
</comment>
<comment type="subunit">
    <text evidence="1">Monomer.</text>
</comment>
<comment type="subcellular location">
    <subcellularLocation>
        <location evidence="1">Cytoplasm</location>
    </subcellularLocation>
</comment>
<comment type="similarity">
    <text evidence="1">Belongs to the TRAFAC class OBG-HflX-like GTPase superfamily. OBG GTPase family.</text>
</comment>
<organism>
    <name type="scientific">Bradyrhizobium diazoefficiens (strain JCM 10833 / BCRC 13528 / IAM 13628 / NBRC 14792 / USDA 110)</name>
    <dbReference type="NCBI Taxonomy" id="224911"/>
    <lineage>
        <taxon>Bacteria</taxon>
        <taxon>Pseudomonadati</taxon>
        <taxon>Pseudomonadota</taxon>
        <taxon>Alphaproteobacteria</taxon>
        <taxon>Hyphomicrobiales</taxon>
        <taxon>Nitrobacteraceae</taxon>
        <taxon>Bradyrhizobium</taxon>
    </lineage>
</organism>
<reference key="1">
    <citation type="journal article" date="2002" name="DNA Res.">
        <title>Complete genomic sequence of nitrogen-fixing symbiotic bacterium Bradyrhizobium japonicum USDA110.</title>
        <authorList>
            <person name="Kaneko T."/>
            <person name="Nakamura Y."/>
            <person name="Sato S."/>
            <person name="Minamisawa K."/>
            <person name="Uchiumi T."/>
            <person name="Sasamoto S."/>
            <person name="Watanabe A."/>
            <person name="Idesawa K."/>
            <person name="Iriguchi M."/>
            <person name="Kawashima K."/>
            <person name="Kohara M."/>
            <person name="Matsumoto M."/>
            <person name="Shimpo S."/>
            <person name="Tsuruoka H."/>
            <person name="Wada T."/>
            <person name="Yamada M."/>
            <person name="Tabata S."/>
        </authorList>
    </citation>
    <scope>NUCLEOTIDE SEQUENCE [LARGE SCALE GENOMIC DNA]</scope>
    <source>
        <strain>JCM 10833 / BCRC 13528 / IAM 13628 / NBRC 14792 / USDA 110</strain>
    </source>
</reference>
<name>OBG_BRADU</name>
<dbReference type="EC" id="3.6.5.-" evidence="1"/>
<dbReference type="EMBL" id="BA000040">
    <property type="protein sequence ID" value="BAC45690.1"/>
    <property type="molecule type" value="Genomic_DNA"/>
</dbReference>
<dbReference type="RefSeq" id="NP_767065.1">
    <property type="nucleotide sequence ID" value="NC_004463.1"/>
</dbReference>
<dbReference type="RefSeq" id="WP_011083257.1">
    <property type="nucleotide sequence ID" value="NC_004463.1"/>
</dbReference>
<dbReference type="SMR" id="Q89X89"/>
<dbReference type="FunCoup" id="Q89X89">
    <property type="interactions" value="689"/>
</dbReference>
<dbReference type="STRING" id="224911.AAV28_41375"/>
<dbReference type="EnsemblBacteria" id="BAC45690">
    <property type="protein sequence ID" value="BAC45690"/>
    <property type="gene ID" value="BAC45690"/>
</dbReference>
<dbReference type="GeneID" id="46495571"/>
<dbReference type="KEGG" id="bja:blr0425"/>
<dbReference type="PATRIC" id="fig|224911.44.peg.8955"/>
<dbReference type="eggNOG" id="COG0536">
    <property type="taxonomic scope" value="Bacteria"/>
</dbReference>
<dbReference type="HOGENOM" id="CLU_011747_2_0_5"/>
<dbReference type="InParanoid" id="Q89X89"/>
<dbReference type="OrthoDB" id="9807318at2"/>
<dbReference type="PhylomeDB" id="Q89X89"/>
<dbReference type="Proteomes" id="UP000002526">
    <property type="component" value="Chromosome"/>
</dbReference>
<dbReference type="GO" id="GO:0005737">
    <property type="term" value="C:cytoplasm"/>
    <property type="evidence" value="ECO:0007669"/>
    <property type="project" value="UniProtKB-SubCell"/>
</dbReference>
<dbReference type="GO" id="GO:0005525">
    <property type="term" value="F:GTP binding"/>
    <property type="evidence" value="ECO:0000318"/>
    <property type="project" value="GO_Central"/>
</dbReference>
<dbReference type="GO" id="GO:0003924">
    <property type="term" value="F:GTPase activity"/>
    <property type="evidence" value="ECO:0000318"/>
    <property type="project" value="GO_Central"/>
</dbReference>
<dbReference type="GO" id="GO:0000287">
    <property type="term" value="F:magnesium ion binding"/>
    <property type="evidence" value="ECO:0007669"/>
    <property type="project" value="InterPro"/>
</dbReference>
<dbReference type="GO" id="GO:0042254">
    <property type="term" value="P:ribosome biogenesis"/>
    <property type="evidence" value="ECO:0007669"/>
    <property type="project" value="UniProtKB-UniRule"/>
</dbReference>
<dbReference type="CDD" id="cd01898">
    <property type="entry name" value="Obg"/>
    <property type="match status" value="1"/>
</dbReference>
<dbReference type="FunFam" id="2.70.210.12:FF:000001">
    <property type="entry name" value="GTPase Obg"/>
    <property type="match status" value="1"/>
</dbReference>
<dbReference type="Gene3D" id="2.70.210.12">
    <property type="entry name" value="GTP1/OBG domain"/>
    <property type="match status" value="1"/>
</dbReference>
<dbReference type="Gene3D" id="3.40.50.300">
    <property type="entry name" value="P-loop containing nucleotide triphosphate hydrolases"/>
    <property type="match status" value="1"/>
</dbReference>
<dbReference type="HAMAP" id="MF_01454">
    <property type="entry name" value="GTPase_Obg"/>
    <property type="match status" value="1"/>
</dbReference>
<dbReference type="InterPro" id="IPR031167">
    <property type="entry name" value="G_OBG"/>
</dbReference>
<dbReference type="InterPro" id="IPR006073">
    <property type="entry name" value="GTP-bd"/>
</dbReference>
<dbReference type="InterPro" id="IPR014100">
    <property type="entry name" value="GTP-bd_Obg/CgtA"/>
</dbReference>
<dbReference type="InterPro" id="IPR006074">
    <property type="entry name" value="GTP1-OBG_CS"/>
</dbReference>
<dbReference type="InterPro" id="IPR006169">
    <property type="entry name" value="GTP1_OBG_dom"/>
</dbReference>
<dbReference type="InterPro" id="IPR036726">
    <property type="entry name" value="GTP1_OBG_dom_sf"/>
</dbReference>
<dbReference type="InterPro" id="IPR045086">
    <property type="entry name" value="OBG_GTPase"/>
</dbReference>
<dbReference type="InterPro" id="IPR027417">
    <property type="entry name" value="P-loop_NTPase"/>
</dbReference>
<dbReference type="NCBIfam" id="TIGR02729">
    <property type="entry name" value="Obg_CgtA"/>
    <property type="match status" value="1"/>
</dbReference>
<dbReference type="NCBIfam" id="NF008955">
    <property type="entry name" value="PRK12297.1"/>
    <property type="match status" value="1"/>
</dbReference>
<dbReference type="NCBIfam" id="NF008956">
    <property type="entry name" value="PRK12299.1"/>
    <property type="match status" value="1"/>
</dbReference>
<dbReference type="PANTHER" id="PTHR11702">
    <property type="entry name" value="DEVELOPMENTALLY REGULATED GTP-BINDING PROTEIN-RELATED"/>
    <property type="match status" value="1"/>
</dbReference>
<dbReference type="PANTHER" id="PTHR11702:SF31">
    <property type="entry name" value="MITOCHONDRIAL RIBOSOME-ASSOCIATED GTPASE 2"/>
    <property type="match status" value="1"/>
</dbReference>
<dbReference type="Pfam" id="PF01018">
    <property type="entry name" value="GTP1_OBG"/>
    <property type="match status" value="1"/>
</dbReference>
<dbReference type="Pfam" id="PF01926">
    <property type="entry name" value="MMR_HSR1"/>
    <property type="match status" value="1"/>
</dbReference>
<dbReference type="PIRSF" id="PIRSF002401">
    <property type="entry name" value="GTP_bd_Obg/CgtA"/>
    <property type="match status" value="1"/>
</dbReference>
<dbReference type="PRINTS" id="PR00326">
    <property type="entry name" value="GTP1OBG"/>
</dbReference>
<dbReference type="SUPFAM" id="SSF82051">
    <property type="entry name" value="Obg GTP-binding protein N-terminal domain"/>
    <property type="match status" value="1"/>
</dbReference>
<dbReference type="SUPFAM" id="SSF52540">
    <property type="entry name" value="P-loop containing nucleoside triphosphate hydrolases"/>
    <property type="match status" value="1"/>
</dbReference>
<dbReference type="PROSITE" id="PS51710">
    <property type="entry name" value="G_OBG"/>
    <property type="match status" value="1"/>
</dbReference>
<dbReference type="PROSITE" id="PS00905">
    <property type="entry name" value="GTP1_OBG"/>
    <property type="match status" value="1"/>
</dbReference>
<dbReference type="PROSITE" id="PS51883">
    <property type="entry name" value="OBG"/>
    <property type="match status" value="1"/>
</dbReference>
<keyword id="KW-0963">Cytoplasm</keyword>
<keyword id="KW-0342">GTP-binding</keyword>
<keyword id="KW-0378">Hydrolase</keyword>
<keyword id="KW-0460">Magnesium</keyword>
<keyword id="KW-0479">Metal-binding</keyword>
<keyword id="KW-0547">Nucleotide-binding</keyword>
<keyword id="KW-1185">Reference proteome</keyword>
<accession>Q89X89</accession>
<protein>
    <recommendedName>
        <fullName evidence="1">GTPase Obg</fullName>
        <ecNumber evidence="1">3.6.5.-</ecNumber>
    </recommendedName>
    <alternativeName>
        <fullName evidence="1">GTP-binding protein Obg</fullName>
    </alternativeName>
</protein>